<accession>Q1AVY6</accession>
<keyword id="KW-0665">Pyrimidine biosynthesis</keyword>
<keyword id="KW-1185">Reference proteome</keyword>
<keyword id="KW-0808">Transferase</keyword>
<proteinExistence type="inferred from homology"/>
<feature type="chain" id="PRO_0000321154" description="Aspartate carbamoyltransferase catalytic subunit">
    <location>
        <begin position="1"/>
        <end position="305"/>
    </location>
</feature>
<feature type="binding site" evidence="1">
    <location>
        <position position="51"/>
    </location>
    <ligand>
        <name>carbamoyl phosphate</name>
        <dbReference type="ChEBI" id="CHEBI:58228"/>
    </ligand>
</feature>
<feature type="binding site" evidence="1">
    <location>
        <position position="52"/>
    </location>
    <ligand>
        <name>carbamoyl phosphate</name>
        <dbReference type="ChEBI" id="CHEBI:58228"/>
    </ligand>
</feature>
<feature type="binding site" evidence="1">
    <location>
        <position position="79"/>
    </location>
    <ligand>
        <name>L-aspartate</name>
        <dbReference type="ChEBI" id="CHEBI:29991"/>
    </ligand>
</feature>
<feature type="binding site" evidence="1">
    <location>
        <position position="101"/>
    </location>
    <ligand>
        <name>carbamoyl phosphate</name>
        <dbReference type="ChEBI" id="CHEBI:58228"/>
    </ligand>
</feature>
<feature type="binding site" evidence="1">
    <location>
        <position position="129"/>
    </location>
    <ligand>
        <name>carbamoyl phosphate</name>
        <dbReference type="ChEBI" id="CHEBI:58228"/>
    </ligand>
</feature>
<feature type="binding site" evidence="1">
    <location>
        <position position="132"/>
    </location>
    <ligand>
        <name>carbamoyl phosphate</name>
        <dbReference type="ChEBI" id="CHEBI:58228"/>
    </ligand>
</feature>
<feature type="binding site" evidence="1">
    <location>
        <position position="165"/>
    </location>
    <ligand>
        <name>L-aspartate</name>
        <dbReference type="ChEBI" id="CHEBI:29991"/>
    </ligand>
</feature>
<feature type="binding site" evidence="1">
    <location>
        <position position="220"/>
    </location>
    <ligand>
        <name>L-aspartate</name>
        <dbReference type="ChEBI" id="CHEBI:29991"/>
    </ligand>
</feature>
<feature type="binding site" evidence="1">
    <location>
        <position position="258"/>
    </location>
    <ligand>
        <name>carbamoyl phosphate</name>
        <dbReference type="ChEBI" id="CHEBI:58228"/>
    </ligand>
</feature>
<feature type="binding site" evidence="1">
    <location>
        <position position="259"/>
    </location>
    <ligand>
        <name>carbamoyl phosphate</name>
        <dbReference type="ChEBI" id="CHEBI:58228"/>
    </ligand>
</feature>
<sequence length="305" mass="31620">MGARDFLTLEGCDRGELREILELAAGCEAGRMDGALAGKTVCLAFFEASTRTAVSFELAARRCGADVISLSERGSSISKGESLVDTVVTLDRLGADAIVLRHPAAGAARLAARFAAAAVVNAGDGCGQHPTQALLDLYSLSRSVGGFEELAGVRAAVVGDILHSRVARSVIPAFRAAGVELALVAPRTLLPVEAGVWGLPVLSSVDEALEWGASVLYMLRLQRERMTGARVPSVAEYARYYAVGRRHLEAGVRVMHPGPVNRGVEIAGDVVLDGASLIPDQVAAGVAVRSAVLALATGVAQEVAA</sequence>
<dbReference type="EC" id="2.1.3.2" evidence="1"/>
<dbReference type="EMBL" id="CP000386">
    <property type="protein sequence ID" value="ABG04442.1"/>
    <property type="molecule type" value="Genomic_DNA"/>
</dbReference>
<dbReference type="RefSeq" id="WP_011564459.1">
    <property type="nucleotide sequence ID" value="NC_008148.1"/>
</dbReference>
<dbReference type="SMR" id="Q1AVY6"/>
<dbReference type="STRING" id="266117.Rxyl_1480"/>
<dbReference type="KEGG" id="rxy:Rxyl_1480"/>
<dbReference type="eggNOG" id="COG0540">
    <property type="taxonomic scope" value="Bacteria"/>
</dbReference>
<dbReference type="HOGENOM" id="CLU_043846_2_0_11"/>
<dbReference type="OrthoDB" id="9774690at2"/>
<dbReference type="PhylomeDB" id="Q1AVY6"/>
<dbReference type="UniPathway" id="UPA00070">
    <property type="reaction ID" value="UER00116"/>
</dbReference>
<dbReference type="Proteomes" id="UP000006637">
    <property type="component" value="Chromosome"/>
</dbReference>
<dbReference type="GO" id="GO:0005829">
    <property type="term" value="C:cytosol"/>
    <property type="evidence" value="ECO:0007669"/>
    <property type="project" value="TreeGrafter"/>
</dbReference>
<dbReference type="GO" id="GO:0016597">
    <property type="term" value="F:amino acid binding"/>
    <property type="evidence" value="ECO:0007669"/>
    <property type="project" value="InterPro"/>
</dbReference>
<dbReference type="GO" id="GO:0004070">
    <property type="term" value="F:aspartate carbamoyltransferase activity"/>
    <property type="evidence" value="ECO:0007669"/>
    <property type="project" value="UniProtKB-UniRule"/>
</dbReference>
<dbReference type="GO" id="GO:0006207">
    <property type="term" value="P:'de novo' pyrimidine nucleobase biosynthetic process"/>
    <property type="evidence" value="ECO:0007669"/>
    <property type="project" value="InterPro"/>
</dbReference>
<dbReference type="GO" id="GO:0044205">
    <property type="term" value="P:'de novo' UMP biosynthetic process"/>
    <property type="evidence" value="ECO:0007669"/>
    <property type="project" value="UniProtKB-UniRule"/>
</dbReference>
<dbReference type="GO" id="GO:0006520">
    <property type="term" value="P:amino acid metabolic process"/>
    <property type="evidence" value="ECO:0007669"/>
    <property type="project" value="InterPro"/>
</dbReference>
<dbReference type="Gene3D" id="3.40.50.1370">
    <property type="entry name" value="Aspartate/ornithine carbamoyltransferase"/>
    <property type="match status" value="2"/>
</dbReference>
<dbReference type="HAMAP" id="MF_00001">
    <property type="entry name" value="Asp_carb_tr"/>
    <property type="match status" value="1"/>
</dbReference>
<dbReference type="InterPro" id="IPR006132">
    <property type="entry name" value="Asp/Orn_carbamoyltranf_P-bd"/>
</dbReference>
<dbReference type="InterPro" id="IPR006130">
    <property type="entry name" value="Asp/Orn_carbamoylTrfase"/>
</dbReference>
<dbReference type="InterPro" id="IPR036901">
    <property type="entry name" value="Asp/Orn_carbamoylTrfase_sf"/>
</dbReference>
<dbReference type="InterPro" id="IPR002082">
    <property type="entry name" value="Asp_carbamoyltransf"/>
</dbReference>
<dbReference type="InterPro" id="IPR006131">
    <property type="entry name" value="Asp_carbamoyltransf_Asp/Orn-bd"/>
</dbReference>
<dbReference type="NCBIfam" id="TIGR00670">
    <property type="entry name" value="asp_carb_tr"/>
    <property type="match status" value="1"/>
</dbReference>
<dbReference type="NCBIfam" id="NF002032">
    <property type="entry name" value="PRK00856.1"/>
    <property type="match status" value="1"/>
</dbReference>
<dbReference type="PANTHER" id="PTHR45753:SF6">
    <property type="entry name" value="ASPARTATE CARBAMOYLTRANSFERASE"/>
    <property type="match status" value="1"/>
</dbReference>
<dbReference type="PANTHER" id="PTHR45753">
    <property type="entry name" value="ORNITHINE CARBAMOYLTRANSFERASE, MITOCHONDRIAL"/>
    <property type="match status" value="1"/>
</dbReference>
<dbReference type="Pfam" id="PF00185">
    <property type="entry name" value="OTCace"/>
    <property type="match status" value="1"/>
</dbReference>
<dbReference type="Pfam" id="PF02729">
    <property type="entry name" value="OTCace_N"/>
    <property type="match status" value="1"/>
</dbReference>
<dbReference type="PRINTS" id="PR00100">
    <property type="entry name" value="AOTCASE"/>
</dbReference>
<dbReference type="PRINTS" id="PR00101">
    <property type="entry name" value="ATCASE"/>
</dbReference>
<dbReference type="SUPFAM" id="SSF53671">
    <property type="entry name" value="Aspartate/ornithine carbamoyltransferase"/>
    <property type="match status" value="1"/>
</dbReference>
<dbReference type="PROSITE" id="PS00097">
    <property type="entry name" value="CARBAMOYLTRANSFERASE"/>
    <property type="match status" value="1"/>
</dbReference>
<protein>
    <recommendedName>
        <fullName evidence="1">Aspartate carbamoyltransferase catalytic subunit</fullName>
        <ecNumber evidence="1">2.1.3.2</ecNumber>
    </recommendedName>
    <alternativeName>
        <fullName evidence="1">Aspartate transcarbamylase</fullName>
        <shortName evidence="1">ATCase</shortName>
    </alternativeName>
</protein>
<evidence type="ECO:0000255" key="1">
    <source>
        <dbReference type="HAMAP-Rule" id="MF_00001"/>
    </source>
</evidence>
<organism>
    <name type="scientific">Rubrobacter xylanophilus (strain DSM 9941 / JCM 11954 / NBRC 16129 / PRD-1)</name>
    <dbReference type="NCBI Taxonomy" id="266117"/>
    <lineage>
        <taxon>Bacteria</taxon>
        <taxon>Bacillati</taxon>
        <taxon>Actinomycetota</taxon>
        <taxon>Rubrobacteria</taxon>
        <taxon>Rubrobacterales</taxon>
        <taxon>Rubrobacteraceae</taxon>
        <taxon>Rubrobacter</taxon>
    </lineage>
</organism>
<reference key="1">
    <citation type="submission" date="2006-06" db="EMBL/GenBank/DDBJ databases">
        <title>Complete sequence of Rubrobacter xylanophilus DSM 9941.</title>
        <authorList>
            <consortium name="US DOE Joint Genome Institute"/>
            <person name="Copeland A."/>
            <person name="Lucas S."/>
            <person name="Lapidus A."/>
            <person name="Barry K."/>
            <person name="Detter J.C."/>
            <person name="Glavina del Rio T."/>
            <person name="Hammon N."/>
            <person name="Israni S."/>
            <person name="Dalin E."/>
            <person name="Tice H."/>
            <person name="Pitluck S."/>
            <person name="Munk A.C."/>
            <person name="Brettin T."/>
            <person name="Bruce D."/>
            <person name="Han C."/>
            <person name="Tapia R."/>
            <person name="Gilna P."/>
            <person name="Schmutz J."/>
            <person name="Larimer F."/>
            <person name="Land M."/>
            <person name="Hauser L."/>
            <person name="Kyrpides N."/>
            <person name="Lykidis A."/>
            <person name="da Costa M.S."/>
            <person name="Rainey F.A."/>
            <person name="Empadinhas N."/>
            <person name="Jolivet E."/>
            <person name="Battista J.R."/>
            <person name="Richardson P."/>
        </authorList>
    </citation>
    <scope>NUCLEOTIDE SEQUENCE [LARGE SCALE GENOMIC DNA]</scope>
    <source>
        <strain>DSM 9941 / JCM 11954 / NBRC 16129 / PRD-1</strain>
    </source>
</reference>
<name>PYRB_RUBXD</name>
<comment type="function">
    <text evidence="1">Catalyzes the condensation of carbamoyl phosphate and aspartate to form carbamoyl aspartate and inorganic phosphate, the committed step in the de novo pyrimidine nucleotide biosynthesis pathway.</text>
</comment>
<comment type="catalytic activity">
    <reaction evidence="1">
        <text>carbamoyl phosphate + L-aspartate = N-carbamoyl-L-aspartate + phosphate + H(+)</text>
        <dbReference type="Rhea" id="RHEA:20013"/>
        <dbReference type="ChEBI" id="CHEBI:15378"/>
        <dbReference type="ChEBI" id="CHEBI:29991"/>
        <dbReference type="ChEBI" id="CHEBI:32814"/>
        <dbReference type="ChEBI" id="CHEBI:43474"/>
        <dbReference type="ChEBI" id="CHEBI:58228"/>
        <dbReference type="EC" id="2.1.3.2"/>
    </reaction>
</comment>
<comment type="pathway">
    <text evidence="1">Pyrimidine metabolism; UMP biosynthesis via de novo pathway; (S)-dihydroorotate from bicarbonate: step 2/3.</text>
</comment>
<comment type="subunit">
    <text evidence="1">Heterododecamer (2C3:3R2) of six catalytic PyrB chains organized as two trimers (C3), and six regulatory PyrI chains organized as three dimers (R2).</text>
</comment>
<comment type="similarity">
    <text evidence="1">Belongs to the aspartate/ornithine carbamoyltransferase superfamily. ATCase family.</text>
</comment>
<gene>
    <name evidence="1" type="primary">pyrB</name>
    <name type="ordered locus">Rxyl_1480</name>
</gene>